<feature type="chain" id="PRO_1000166227" description="Large ribosomal subunit protein uL18">
    <location>
        <begin position="1"/>
        <end position="124"/>
    </location>
</feature>
<gene>
    <name evidence="1" type="primary">rplR</name>
    <name type="ordered locus">Dole_0724</name>
</gene>
<comment type="function">
    <text evidence="1">This is one of the proteins that bind and probably mediate the attachment of the 5S RNA into the large ribosomal subunit, where it forms part of the central protuberance.</text>
</comment>
<comment type="subunit">
    <text evidence="1">Part of the 50S ribosomal subunit; part of the 5S rRNA/L5/L18/L25 subcomplex. Contacts the 5S and 23S rRNAs.</text>
</comment>
<comment type="similarity">
    <text evidence="1">Belongs to the universal ribosomal protein uL18 family.</text>
</comment>
<sequence>MGAANKKQELRLKRKARIRKKIAGTPERPRLSIFRSARHIYAQLIDDTKGVTFVTASSNEPDVKNNTELSGKNKSEVAVFVGKLIAGRAKDKGISSVVFDRGGFVYHGRVKAVSDGAREGGLNF</sequence>
<name>RL18_DESOH</name>
<reference key="1">
    <citation type="submission" date="2007-10" db="EMBL/GenBank/DDBJ databases">
        <title>Complete sequence of Desulfococcus oleovorans Hxd3.</title>
        <authorList>
            <consortium name="US DOE Joint Genome Institute"/>
            <person name="Copeland A."/>
            <person name="Lucas S."/>
            <person name="Lapidus A."/>
            <person name="Barry K."/>
            <person name="Glavina del Rio T."/>
            <person name="Dalin E."/>
            <person name="Tice H."/>
            <person name="Pitluck S."/>
            <person name="Kiss H."/>
            <person name="Brettin T."/>
            <person name="Bruce D."/>
            <person name="Detter J.C."/>
            <person name="Han C."/>
            <person name="Schmutz J."/>
            <person name="Larimer F."/>
            <person name="Land M."/>
            <person name="Hauser L."/>
            <person name="Kyrpides N."/>
            <person name="Kim E."/>
            <person name="Wawrik B."/>
            <person name="Richardson P."/>
        </authorList>
    </citation>
    <scope>NUCLEOTIDE SEQUENCE [LARGE SCALE GENOMIC DNA]</scope>
    <source>
        <strain>DSM 6200 / JCM 39069 / Hxd3</strain>
    </source>
</reference>
<protein>
    <recommendedName>
        <fullName evidence="1">Large ribosomal subunit protein uL18</fullName>
    </recommendedName>
    <alternativeName>
        <fullName evidence="2">50S ribosomal protein L18</fullName>
    </alternativeName>
</protein>
<proteinExistence type="inferred from homology"/>
<dbReference type="EMBL" id="CP000859">
    <property type="protein sequence ID" value="ABW66534.1"/>
    <property type="molecule type" value="Genomic_DNA"/>
</dbReference>
<dbReference type="RefSeq" id="WP_012174152.1">
    <property type="nucleotide sequence ID" value="NC_009943.1"/>
</dbReference>
<dbReference type="SMR" id="A8ZV73"/>
<dbReference type="STRING" id="96561.Dole_0724"/>
<dbReference type="KEGG" id="dol:Dole_0724"/>
<dbReference type="eggNOG" id="COG0256">
    <property type="taxonomic scope" value="Bacteria"/>
</dbReference>
<dbReference type="HOGENOM" id="CLU_098841_0_1_7"/>
<dbReference type="OrthoDB" id="9810939at2"/>
<dbReference type="Proteomes" id="UP000008561">
    <property type="component" value="Chromosome"/>
</dbReference>
<dbReference type="GO" id="GO:0022625">
    <property type="term" value="C:cytosolic large ribosomal subunit"/>
    <property type="evidence" value="ECO:0007669"/>
    <property type="project" value="TreeGrafter"/>
</dbReference>
<dbReference type="GO" id="GO:0008097">
    <property type="term" value="F:5S rRNA binding"/>
    <property type="evidence" value="ECO:0007669"/>
    <property type="project" value="TreeGrafter"/>
</dbReference>
<dbReference type="GO" id="GO:0003735">
    <property type="term" value="F:structural constituent of ribosome"/>
    <property type="evidence" value="ECO:0007669"/>
    <property type="project" value="InterPro"/>
</dbReference>
<dbReference type="GO" id="GO:0006412">
    <property type="term" value="P:translation"/>
    <property type="evidence" value="ECO:0007669"/>
    <property type="project" value="UniProtKB-UniRule"/>
</dbReference>
<dbReference type="CDD" id="cd00432">
    <property type="entry name" value="Ribosomal_L18_L5e"/>
    <property type="match status" value="1"/>
</dbReference>
<dbReference type="FunFam" id="3.30.420.100:FF:000001">
    <property type="entry name" value="50S ribosomal protein L18"/>
    <property type="match status" value="1"/>
</dbReference>
<dbReference type="Gene3D" id="3.30.420.100">
    <property type="match status" value="1"/>
</dbReference>
<dbReference type="HAMAP" id="MF_01337_B">
    <property type="entry name" value="Ribosomal_uL18_B"/>
    <property type="match status" value="1"/>
</dbReference>
<dbReference type="InterPro" id="IPR004389">
    <property type="entry name" value="Ribosomal_uL18_bac-type"/>
</dbReference>
<dbReference type="InterPro" id="IPR005484">
    <property type="entry name" value="Ribosomal_uL18_bac/euk"/>
</dbReference>
<dbReference type="NCBIfam" id="TIGR00060">
    <property type="entry name" value="L18_bact"/>
    <property type="match status" value="1"/>
</dbReference>
<dbReference type="PANTHER" id="PTHR12899">
    <property type="entry name" value="39S RIBOSOMAL PROTEIN L18, MITOCHONDRIAL"/>
    <property type="match status" value="1"/>
</dbReference>
<dbReference type="PANTHER" id="PTHR12899:SF3">
    <property type="entry name" value="LARGE RIBOSOMAL SUBUNIT PROTEIN UL18M"/>
    <property type="match status" value="1"/>
</dbReference>
<dbReference type="Pfam" id="PF00861">
    <property type="entry name" value="Ribosomal_L18p"/>
    <property type="match status" value="1"/>
</dbReference>
<dbReference type="SUPFAM" id="SSF53137">
    <property type="entry name" value="Translational machinery components"/>
    <property type="match status" value="1"/>
</dbReference>
<organism>
    <name type="scientific">Desulfosudis oleivorans (strain DSM 6200 / JCM 39069 / Hxd3)</name>
    <name type="common">Desulfococcus oleovorans</name>
    <dbReference type="NCBI Taxonomy" id="96561"/>
    <lineage>
        <taxon>Bacteria</taxon>
        <taxon>Pseudomonadati</taxon>
        <taxon>Thermodesulfobacteriota</taxon>
        <taxon>Desulfobacteria</taxon>
        <taxon>Desulfobacterales</taxon>
        <taxon>Desulfosudaceae</taxon>
        <taxon>Desulfosudis</taxon>
    </lineage>
</organism>
<accession>A8ZV73</accession>
<keyword id="KW-1185">Reference proteome</keyword>
<keyword id="KW-0687">Ribonucleoprotein</keyword>
<keyword id="KW-0689">Ribosomal protein</keyword>
<keyword id="KW-0694">RNA-binding</keyword>
<keyword id="KW-0699">rRNA-binding</keyword>
<evidence type="ECO:0000255" key="1">
    <source>
        <dbReference type="HAMAP-Rule" id="MF_01337"/>
    </source>
</evidence>
<evidence type="ECO:0000305" key="2"/>